<comment type="function">
    <text evidence="6 7">Acts as a component of the MCM2-7 complex (MCM complex) which is the putative replicative helicase essential for 'once per cell cycle' DNA replication initiation and elongation in eukaryotic cells. The active ATPase sites in the MCM2-7 ring are formed through the interaction surfaces of two neighboring subunits such that a critical structure of a conserved arginine finger motif is provided in trans relative to the ATP-binding site of the Walker A box of the adjacent subunit. The six ATPase active sites, however, are likely to contribute differentially to the complex helicase activity; specifically the MCM2-MCM5 association is proposed to be reversible and to mediate a open ring conformation which may facilitate DNA loading. Once loaded onto DNA, double hexamers can slide on dsDNA in the absence of ATPase activity.</text>
</comment>
<comment type="catalytic activity">
    <reaction>
        <text>ATP + H2O = ADP + phosphate + H(+)</text>
        <dbReference type="Rhea" id="RHEA:13065"/>
        <dbReference type="ChEBI" id="CHEBI:15377"/>
        <dbReference type="ChEBI" id="CHEBI:15378"/>
        <dbReference type="ChEBI" id="CHEBI:30616"/>
        <dbReference type="ChEBI" id="CHEBI:43474"/>
        <dbReference type="ChEBI" id="CHEBI:456216"/>
        <dbReference type="EC" id="3.6.4.12"/>
    </reaction>
</comment>
<comment type="subunit">
    <text evidence="4 6 7">Component of the MCM2-7 complex. The complex forms a toroidal hexameric ring with the proposed subunit order MCM2-MCM6-MCM4-MCM7-MCM3-MCM5; loaded onto DNA, forms a head-head double hexamer. Interacts with CSM1.</text>
</comment>
<comment type="interaction">
    <interactant intactId="EBI-10549">
        <id>P29496</id>
    </interactant>
    <interactant intactId="EBI-22001">
        <id>P25651</id>
        <label>CSM1</label>
    </interactant>
    <organismsDiffer>false</organismsDiffer>
    <experiments>2</experiments>
</comment>
<comment type="interaction">
    <interactant intactId="EBI-10549">
        <id>P29496</id>
    </interactant>
    <interactant intactId="EBI-10541">
        <id>P24279</id>
        <label>MCM3</label>
    </interactant>
    <organismsDiffer>false</organismsDiffer>
    <experiments>6</experiments>
</comment>
<comment type="interaction">
    <interactant intactId="EBI-10549">
        <id>P29496</id>
    </interactant>
    <interactant intactId="EBI-30392">
        <id>Q12146</id>
        <label>PSF3</label>
    </interactant>
    <organismsDiffer>false</organismsDiffer>
    <experiments>2</experiments>
</comment>
<comment type="interaction">
    <interactant intactId="EBI-10549">
        <id>P29496</id>
    </interactant>
    <interactant intactId="EBI-17490">
        <id>Q12306</id>
        <label>SMT3</label>
    </interactant>
    <organismsDiffer>false</organismsDiffer>
    <experiments>3</experiments>
</comment>
<comment type="subcellular location">
    <subcellularLocation>
        <location>Nucleus</location>
    </subcellularLocation>
    <text>Mobilized from the cytoplasm to the nucleus as mitosis is completed. Remains in the nucleus until the initiation of the next round of replication.</text>
</comment>
<comment type="miscellaneous">
    <text evidence="3">Present with 10300 molecules/cell in log phase SD medium.</text>
</comment>
<comment type="miscellaneous">
    <text>Early fractionation of eukaryotic MCM proteins yielded a variety of dimeric, trimeric and tetrameric complexes with unclear biological significance. The MCM2-7 hexamer is the proposed physiological active complex.</text>
</comment>
<comment type="similarity">
    <text evidence="8">Belongs to the MCM family.</text>
</comment>
<feature type="chain" id="PRO_0000194111" description="Minichromosome maintenance protein 5">
    <location>
        <begin position="1"/>
        <end position="775"/>
    </location>
</feature>
<feature type="domain" description="MCM">
    <location>
        <begin position="366"/>
        <end position="573"/>
    </location>
</feature>
<feature type="region of interest" description="Disordered" evidence="2">
    <location>
        <begin position="1"/>
        <end position="22"/>
    </location>
</feature>
<feature type="short sequence motif" description="Arginine finger">
    <location>
        <begin position="548"/>
        <end position="551"/>
    </location>
</feature>
<feature type="binding site" evidence="1">
    <location>
        <begin position="416"/>
        <end position="423"/>
    </location>
    <ligand>
        <name>ATP</name>
        <dbReference type="ChEBI" id="CHEBI:30616"/>
    </ligand>
</feature>
<feature type="mutagenesis site" description="Loss of MCM2-7 complex helicase activity." evidence="5">
    <original>K</original>
    <variation>A</variation>
    <location>
        <position position="422"/>
    </location>
</feature>
<feature type="helix" evidence="9">
    <location>
        <begin position="21"/>
        <end position="37"/>
    </location>
</feature>
<feature type="helix" evidence="9">
    <location>
        <begin position="45"/>
        <end position="55"/>
    </location>
</feature>
<feature type="strand" evidence="9">
    <location>
        <begin position="60"/>
        <end position="64"/>
    </location>
</feature>
<feature type="helix" evidence="9">
    <location>
        <begin position="65"/>
        <end position="71"/>
    </location>
</feature>
<feature type="helix" evidence="9">
    <location>
        <begin position="73"/>
        <end position="81"/>
    </location>
</feature>
<feature type="helix" evidence="9">
    <location>
        <begin position="83"/>
        <end position="102"/>
    </location>
</feature>
<feature type="strand" evidence="9">
    <location>
        <begin position="136"/>
        <end position="140"/>
    </location>
</feature>
<feature type="turn" evidence="9">
    <location>
        <begin position="148"/>
        <end position="150"/>
    </location>
</feature>
<feature type="helix" evidence="9">
    <location>
        <begin position="153"/>
        <end position="155"/>
    </location>
</feature>
<feature type="strand" evidence="9">
    <location>
        <begin position="158"/>
        <end position="169"/>
    </location>
</feature>
<feature type="strand" evidence="9">
    <location>
        <begin position="173"/>
        <end position="183"/>
    </location>
</feature>
<feature type="turn" evidence="9">
    <location>
        <begin position="184"/>
        <end position="186"/>
    </location>
</feature>
<feature type="strand" evidence="9">
    <location>
        <begin position="189"/>
        <end position="193"/>
    </location>
</feature>
<feature type="strand" evidence="9">
    <location>
        <begin position="241"/>
        <end position="259"/>
    </location>
</feature>
<feature type="helix" evidence="9">
    <location>
        <begin position="262"/>
        <end position="264"/>
    </location>
</feature>
<feature type="strand" evidence="9">
    <location>
        <begin position="273"/>
        <end position="279"/>
    </location>
</feature>
<feature type="helix" evidence="9">
    <location>
        <begin position="280"/>
        <end position="282"/>
    </location>
</feature>
<feature type="strand" evidence="9">
    <location>
        <begin position="291"/>
        <end position="301"/>
    </location>
</feature>
<feature type="strand" evidence="9">
    <location>
        <begin position="325"/>
        <end position="337"/>
    </location>
</feature>
<feature type="strand" evidence="9">
    <location>
        <begin position="340"/>
        <end position="342"/>
    </location>
</feature>
<feature type="helix" evidence="9">
    <location>
        <begin position="351"/>
        <end position="361"/>
    </location>
</feature>
<feature type="helix" evidence="9">
    <location>
        <begin position="366"/>
        <end position="373"/>
    </location>
</feature>
<feature type="helix" evidence="9">
    <location>
        <begin position="382"/>
        <end position="393"/>
    </location>
</feature>
<feature type="strand" evidence="9">
    <location>
        <begin position="412"/>
        <end position="416"/>
    </location>
</feature>
<feature type="helix" evidence="9">
    <location>
        <begin position="422"/>
        <end position="432"/>
    </location>
</feature>
<feature type="strand" evidence="9">
    <location>
        <begin position="433"/>
        <end position="440"/>
    </location>
</feature>
<feature type="helix" evidence="9">
    <location>
        <begin position="441"/>
        <end position="443"/>
    </location>
</feature>
<feature type="helix" evidence="9">
    <location>
        <begin position="446"/>
        <end position="449"/>
    </location>
</feature>
<feature type="strand" evidence="9">
    <location>
        <begin position="450"/>
        <end position="456"/>
    </location>
</feature>
<feature type="turn" evidence="9">
    <location>
        <begin position="457"/>
        <end position="460"/>
    </location>
</feature>
<feature type="strand" evidence="9">
    <location>
        <begin position="461"/>
        <end position="466"/>
    </location>
</feature>
<feature type="helix" evidence="9">
    <location>
        <begin position="468"/>
        <end position="471"/>
    </location>
</feature>
<feature type="turn" evidence="9">
    <location>
        <begin position="472"/>
        <end position="474"/>
    </location>
</feature>
<feature type="strand" evidence="9">
    <location>
        <begin position="475"/>
        <end position="481"/>
    </location>
</feature>
<feature type="helix" evidence="9">
    <location>
        <begin position="482"/>
        <end position="484"/>
    </location>
</feature>
<feature type="helix" evidence="9">
    <location>
        <begin position="487"/>
        <end position="491"/>
    </location>
</feature>
<feature type="helix" evidence="9">
    <location>
        <begin position="493"/>
        <end position="498"/>
    </location>
</feature>
<feature type="strand" evidence="9">
    <location>
        <begin position="500"/>
        <end position="506"/>
    </location>
</feature>
<feature type="strand" evidence="9">
    <location>
        <begin position="509"/>
        <end position="514"/>
    </location>
</feature>
<feature type="strand" evidence="9">
    <location>
        <begin position="518"/>
        <end position="523"/>
    </location>
</feature>
<feature type="helix" evidence="9">
    <location>
        <begin position="536"/>
        <end position="539"/>
    </location>
</feature>
<feature type="helix" evidence="9">
    <location>
        <begin position="544"/>
        <end position="548"/>
    </location>
</feature>
<feature type="strand" evidence="9">
    <location>
        <begin position="551"/>
        <end position="556"/>
    </location>
</feature>
<feature type="helix" evidence="9">
    <location>
        <begin position="562"/>
        <end position="576"/>
    </location>
</feature>
<feature type="helix" evidence="9">
    <location>
        <begin position="579"/>
        <end position="589"/>
    </location>
</feature>
<feature type="helix" evidence="9">
    <location>
        <begin position="596"/>
        <end position="609"/>
    </location>
</feature>
<feature type="helix" evidence="9">
    <location>
        <begin position="616"/>
        <end position="639"/>
    </location>
</feature>
<feature type="helix" evidence="9">
    <location>
        <begin position="650"/>
        <end position="666"/>
    </location>
</feature>
<feature type="strand" evidence="9">
    <location>
        <begin position="670"/>
        <end position="672"/>
    </location>
</feature>
<feature type="helix" evidence="9">
    <location>
        <begin position="674"/>
        <end position="692"/>
    </location>
</feature>
<feature type="helix" evidence="9">
    <location>
        <begin position="711"/>
        <end position="721"/>
    </location>
</feature>
<feature type="strand" evidence="9">
    <location>
        <begin position="727"/>
        <end position="729"/>
    </location>
</feature>
<feature type="helix" evidence="9">
    <location>
        <begin position="730"/>
        <end position="739"/>
    </location>
</feature>
<feature type="helix" evidence="9">
    <location>
        <begin position="747"/>
        <end position="757"/>
    </location>
</feature>
<feature type="strand" evidence="9">
    <location>
        <begin position="758"/>
        <end position="760"/>
    </location>
</feature>
<feature type="strand" evidence="9">
    <location>
        <begin position="762"/>
        <end position="764"/>
    </location>
</feature>
<feature type="turn" evidence="9">
    <location>
        <begin position="765"/>
        <end position="768"/>
    </location>
</feature>
<feature type="strand" evidence="9">
    <location>
        <begin position="769"/>
        <end position="771"/>
    </location>
</feature>
<organism>
    <name type="scientific">Saccharomyces cerevisiae (strain ATCC 204508 / S288c)</name>
    <name type="common">Baker's yeast</name>
    <dbReference type="NCBI Taxonomy" id="559292"/>
    <lineage>
        <taxon>Eukaryota</taxon>
        <taxon>Fungi</taxon>
        <taxon>Dikarya</taxon>
        <taxon>Ascomycota</taxon>
        <taxon>Saccharomycotina</taxon>
        <taxon>Saccharomycetes</taxon>
        <taxon>Saccharomycetales</taxon>
        <taxon>Saccharomycetaceae</taxon>
        <taxon>Saccharomyces</taxon>
    </lineage>
</organism>
<protein>
    <recommendedName>
        <fullName>Minichromosome maintenance protein 5</fullName>
        <ecNumber>3.6.4.12</ecNumber>
    </recommendedName>
    <alternativeName>
        <fullName>Cell division control protein 46</fullName>
    </alternativeName>
</protein>
<reference key="1">
    <citation type="journal article" date="1991" name="Genes Dev.">
        <title>A group of interacting yeast DNA replication genes.</title>
        <authorList>
            <person name="Hennessy K.M."/>
            <person name="Lee A."/>
            <person name="Chen E."/>
            <person name="Botstein D."/>
        </authorList>
    </citation>
    <scope>NUCLEOTIDE SEQUENCE</scope>
</reference>
<reference key="2">
    <citation type="journal article" date="1997" name="Nature">
        <title>The nucleotide sequence of Saccharomyces cerevisiae chromosome XII.</title>
        <authorList>
            <person name="Johnston M."/>
            <person name="Hillier L.W."/>
            <person name="Riles L."/>
            <person name="Albermann K."/>
            <person name="Andre B."/>
            <person name="Ansorge W."/>
            <person name="Benes V."/>
            <person name="Brueckner M."/>
            <person name="Delius H."/>
            <person name="Dubois E."/>
            <person name="Duesterhoeft A."/>
            <person name="Entian K.-D."/>
            <person name="Floeth M."/>
            <person name="Goffeau A."/>
            <person name="Hebling U."/>
            <person name="Heumann K."/>
            <person name="Heuss-Neitzel D."/>
            <person name="Hilbert H."/>
            <person name="Hilger F."/>
            <person name="Kleine K."/>
            <person name="Koetter P."/>
            <person name="Louis E.J."/>
            <person name="Messenguy F."/>
            <person name="Mewes H.-W."/>
            <person name="Miosga T."/>
            <person name="Moestl D."/>
            <person name="Mueller-Auer S."/>
            <person name="Nentwich U."/>
            <person name="Obermaier B."/>
            <person name="Piravandi E."/>
            <person name="Pohl T.M."/>
            <person name="Portetelle D."/>
            <person name="Purnelle B."/>
            <person name="Rechmann S."/>
            <person name="Rieger M."/>
            <person name="Rinke M."/>
            <person name="Rose M."/>
            <person name="Scharfe M."/>
            <person name="Scherens B."/>
            <person name="Scholler P."/>
            <person name="Schwager C."/>
            <person name="Schwarz S."/>
            <person name="Underwood A.P."/>
            <person name="Urrestarazu L.A."/>
            <person name="Vandenbol M."/>
            <person name="Verhasselt P."/>
            <person name="Vierendeels F."/>
            <person name="Voet M."/>
            <person name="Volckaert G."/>
            <person name="Voss H."/>
            <person name="Wambutt R."/>
            <person name="Wedler E."/>
            <person name="Wedler H."/>
            <person name="Zimmermann F.K."/>
            <person name="Zollner A."/>
            <person name="Hani J."/>
            <person name="Hoheisel J.D."/>
        </authorList>
    </citation>
    <scope>NUCLEOTIDE SEQUENCE [LARGE SCALE GENOMIC DNA]</scope>
    <source>
        <strain>ATCC 204508 / S288c</strain>
    </source>
</reference>
<reference key="3">
    <citation type="journal article" date="2008" name="Mol. Cell">
        <title>The Mcm2-7 complex has in vitro helicase activity.</title>
        <authorList>
            <person name="Bochman M.L."/>
            <person name="Schwacha A."/>
        </authorList>
    </citation>
    <scope>RECONSTITUTION OF THE MCM2-7 COMPLEX</scope>
    <scope>HELICASE ACTIVITY OF THE MCM2-7 COMPLEX</scope>
    <scope>MUTAGENESIS OF LYS-422</scope>
</reference>
<reference key="4">
    <citation type="journal article" date="2009" name="Cell">
        <title>Concerted loading of Mcm2-7 double hexamers around DNA during DNA replication origin licensing.</title>
        <authorList>
            <person name="Remus D."/>
            <person name="Beuron F."/>
            <person name="Tolun G."/>
            <person name="Griffith J.D."/>
            <person name="Morris E.P."/>
            <person name="Diffley J.F."/>
        </authorList>
    </citation>
    <scope>IDENTIFICATION IN THE MCM2-7 COMPLEX</scope>
    <scope>FUNCTION OF THE MCM2-7 COMPLEX</scope>
    <scope>ELECTRON MICROSCOPY OF THE MCM2-7 COMPLEX</scope>
</reference>
<reference key="5">
    <citation type="journal article" date="2009" name="Proc. Natl. Acad. Sci. U.S.A.">
        <title>A double-hexameric MCM2-7 complex is loaded onto origin DNA during licensing of eukaryotic DNA replication.</title>
        <authorList>
            <person name="Evrin C."/>
            <person name="Clarke P."/>
            <person name="Zech J."/>
            <person name="Lurz R."/>
            <person name="Sun J."/>
            <person name="Uhle S."/>
            <person name="Li H."/>
            <person name="Stillman B."/>
            <person name="Speck C."/>
        </authorList>
    </citation>
    <scope>IDENTIFICATION IN THE MCM2-7 COMPLEX</scope>
    <scope>FUNCTION OF THE MCM2-7 COMPLEX</scope>
    <scope>ELECTRON MICROSCOPY OF THE MCM2-7 COMPLEX</scope>
</reference>
<reference key="6">
    <citation type="journal article" date="2014" name="G3 (Bethesda)">
        <title>The reference genome sequence of Saccharomyces cerevisiae: Then and now.</title>
        <authorList>
            <person name="Engel S.R."/>
            <person name="Dietrich F.S."/>
            <person name="Fisk D.G."/>
            <person name="Binkley G."/>
            <person name="Balakrishnan R."/>
            <person name="Costanzo M.C."/>
            <person name="Dwight S.S."/>
            <person name="Hitz B.C."/>
            <person name="Karra K."/>
            <person name="Nash R.S."/>
            <person name="Weng S."/>
            <person name="Wong E.D."/>
            <person name="Lloyd P."/>
            <person name="Skrzypek M.S."/>
            <person name="Miyasato S.R."/>
            <person name="Simison M."/>
            <person name="Cherry J.M."/>
        </authorList>
    </citation>
    <scope>GENOME REANNOTATION</scope>
    <source>
        <strain>ATCC 204508 / S288c</strain>
    </source>
</reference>
<reference key="7">
    <citation type="journal article" date="1992" name="Proc. Natl. Acad. Sci. U.S.A.">
        <title>CDC46/MCM5, a yeast protein whose subcellular localization is cell cycle-regulated, is involved in DNA replication at autonomously replicating sequences.</title>
        <authorList>
            <person name="Chen Y."/>
            <person name="Hennessy K.M."/>
            <person name="Botstein D."/>
            <person name="Tye B.-K."/>
        </authorList>
    </citation>
    <scope>IDENTIFICATION OF CDC46 WITH MCM5</scope>
</reference>
<reference key="8">
    <citation type="journal article" date="2003" name="Nature">
        <title>Global analysis of protein expression in yeast.</title>
        <authorList>
            <person name="Ghaemmaghami S."/>
            <person name="Huh W.-K."/>
            <person name="Bower K."/>
            <person name="Howson R.W."/>
            <person name="Belle A."/>
            <person name="Dephoure N."/>
            <person name="O'Shea E.K."/>
            <person name="Weissman J.S."/>
        </authorList>
    </citation>
    <scope>LEVEL OF PROTEIN EXPRESSION [LARGE SCALE ANALYSIS]</scope>
</reference>
<reference key="9">
    <citation type="journal article" date="2004" name="Exp. Cell Res.">
        <title>Saccharomyces cerevisiae CSM1 gene encoding a protein influencing chromosome segregation in meiosis I interacts with elements of the DNA replication complex.</title>
        <authorList>
            <person name="Wysocka M."/>
            <person name="Rytka J."/>
            <person name="Kurlandzka A."/>
        </authorList>
    </citation>
    <scope>INTERACTION WITH CSM1</scope>
</reference>
<sequence length="775" mass="86411">MSFDRPEIYSAPVLQGESPNDDDNTEIIKSFKNFILEFRLDSQFIYRDQLRNNILVKNYSLTVNMEHLIGYNEDIYKKLSDEPSDIIPLFETAITQVAKRISILSRAQSANNNDKDPENTSMDTDSLLLNSLPTFQLILNSNANQIPLRDLDSEHVSKIVRLSGIIISTSVLSSRATYLSIMCRNCRHTTSITINNFNSITGNTVSLPRSCLSTIESESSMANESNIGDESTKKNCGPDPYIIIHESSKFIDQQFLKLQEIPELVPVGEMPRNLTMTCDRYLTNKVIPGTRVTIVGIYSIYNSKNGAGSGRSGGGNGGSGVAIRTPYIKILGIQSDVETSSIWNSVTMFTEEEEEEFLQLSRNPKLYEILTNSIAPSIFGNEDIKKAIVCLLMGGSKKILPDGMRLRGDINVLLLGDPGTAKSQLLKFVEKVSPIAVYTSGKGSSAAGLTASVQRDPMTREFYLEGGAMVLADGGVVCIDEFDKMRDEDRVAIHEAMEQQTISIAKAGITTVLNSRTSVLAAANPIYGRYDDLKSPGDNIDFQTTILSRFDMIFIVKDDHNEERDISIANHVINIHTGNANAMQNQQEENGSEISIEKMKRYITYCRLKCAPRLSPQAAEKLSSNFVTIRKQLLINELESTERSSIPITIRQLEAIIRITESLAKLELSPIAQERHVDEAIRLFQASTMDAASQDPIGGLNQASGTSLSEIRRFEQELKRRLPIGWSTSYQTLRREFVDTHRFSQLALDKALYALEKHETIQLRHQGQNIYRSGV</sequence>
<keyword id="KW-0002">3D-structure</keyword>
<keyword id="KW-0067">ATP-binding</keyword>
<keyword id="KW-0131">Cell cycle</keyword>
<keyword id="KW-0235">DNA replication</keyword>
<keyword id="KW-0238">DNA-binding</keyword>
<keyword id="KW-0347">Helicase</keyword>
<keyword id="KW-0378">Hydrolase</keyword>
<keyword id="KW-0547">Nucleotide-binding</keyword>
<keyword id="KW-0539">Nucleus</keyword>
<keyword id="KW-1185">Reference proteome</keyword>
<evidence type="ECO:0000255" key="1"/>
<evidence type="ECO:0000256" key="2">
    <source>
        <dbReference type="SAM" id="MobiDB-lite"/>
    </source>
</evidence>
<evidence type="ECO:0000269" key="3">
    <source>
    </source>
</evidence>
<evidence type="ECO:0000269" key="4">
    <source>
    </source>
</evidence>
<evidence type="ECO:0000269" key="5">
    <source>
    </source>
</evidence>
<evidence type="ECO:0000269" key="6">
    <source>
    </source>
</evidence>
<evidence type="ECO:0000269" key="7">
    <source>
    </source>
</evidence>
<evidence type="ECO:0000305" key="8"/>
<evidence type="ECO:0007829" key="9">
    <source>
        <dbReference type="PDB" id="7PMK"/>
    </source>
</evidence>
<dbReference type="EC" id="3.6.4.12"/>
<dbReference type="EMBL" id="U09242">
    <property type="protein sequence ID" value="AAA18027.1"/>
    <property type="molecule type" value="Unassigned_DNA"/>
</dbReference>
<dbReference type="EMBL" id="U17245">
    <property type="protein sequence ID" value="AAB67364.1"/>
    <property type="molecule type" value="Genomic_DNA"/>
</dbReference>
<dbReference type="EMBL" id="BK006945">
    <property type="protein sequence ID" value="DAA09587.1"/>
    <property type="molecule type" value="Genomic_DNA"/>
</dbReference>
<dbReference type="PIR" id="A39631">
    <property type="entry name" value="A39631"/>
</dbReference>
<dbReference type="RefSeq" id="NP_013376.1">
    <property type="nucleotide sequence ID" value="NM_001182161.1"/>
</dbReference>
<dbReference type="PDB" id="3JA8">
    <property type="method" value="EM"/>
    <property type="resolution" value="3.80 A"/>
    <property type="chains" value="5=1-775"/>
</dbReference>
<dbReference type="PDB" id="3JC5">
    <property type="method" value="EM"/>
    <property type="resolution" value="4.70 A"/>
    <property type="chains" value="5=1-775"/>
</dbReference>
<dbReference type="PDB" id="3JC6">
    <property type="method" value="EM"/>
    <property type="resolution" value="3.70 A"/>
    <property type="chains" value="5=1-775"/>
</dbReference>
<dbReference type="PDB" id="3JC7">
    <property type="method" value="EM"/>
    <property type="resolution" value="4.80 A"/>
    <property type="chains" value="5=1-775"/>
</dbReference>
<dbReference type="PDB" id="5BK4">
    <property type="method" value="EM"/>
    <property type="resolution" value="3.90 A"/>
    <property type="chains" value="5/D=1-775"/>
</dbReference>
<dbReference type="PDB" id="5U8S">
    <property type="method" value="EM"/>
    <property type="resolution" value="6.10 A"/>
    <property type="chains" value="5=1-775"/>
</dbReference>
<dbReference type="PDB" id="5U8T">
    <property type="method" value="EM"/>
    <property type="resolution" value="4.90 A"/>
    <property type="chains" value="5=1-775"/>
</dbReference>
<dbReference type="PDB" id="5V8F">
    <property type="method" value="EM"/>
    <property type="resolution" value="3.90 A"/>
    <property type="chains" value="5=1-775"/>
</dbReference>
<dbReference type="PDB" id="5XF8">
    <property type="method" value="EM"/>
    <property type="resolution" value="7.10 A"/>
    <property type="chains" value="5=1-775"/>
</dbReference>
<dbReference type="PDB" id="6EYC">
    <property type="method" value="EM"/>
    <property type="resolution" value="3.80 A"/>
    <property type="chains" value="5=1-775"/>
</dbReference>
<dbReference type="PDB" id="6F0L">
    <property type="method" value="EM"/>
    <property type="resolution" value="4.77 A"/>
    <property type="chains" value="5/D=1-775"/>
</dbReference>
<dbReference type="PDB" id="6HV9">
    <property type="method" value="EM"/>
    <property type="resolution" value="4.98 A"/>
    <property type="chains" value="5=1-775"/>
</dbReference>
<dbReference type="PDB" id="6PTJ">
    <property type="method" value="EM"/>
    <property type="resolution" value="3.80 A"/>
    <property type="chains" value="5=1-775"/>
</dbReference>
<dbReference type="PDB" id="6PTN">
    <property type="method" value="EM"/>
    <property type="resolution" value="5.80 A"/>
    <property type="chains" value="5/l=1-775"/>
</dbReference>
<dbReference type="PDB" id="6PTO">
    <property type="method" value="EM"/>
    <property type="resolution" value="7.00 A"/>
    <property type="chains" value="5/I/k=1-775"/>
</dbReference>
<dbReference type="PDB" id="6RQC">
    <property type="method" value="EM"/>
    <property type="resolution" value="4.40 A"/>
    <property type="chains" value="5=1-775"/>
</dbReference>
<dbReference type="PDB" id="6SKL">
    <property type="method" value="EM"/>
    <property type="resolution" value="3.70 A"/>
    <property type="chains" value="5=1-775"/>
</dbReference>
<dbReference type="PDB" id="6SKO">
    <property type="method" value="EM"/>
    <property type="resolution" value="3.40 A"/>
    <property type="chains" value="5=1-775"/>
</dbReference>
<dbReference type="PDB" id="6U0M">
    <property type="method" value="EM"/>
    <property type="resolution" value="3.90 A"/>
    <property type="chains" value="5=24-693"/>
</dbReference>
<dbReference type="PDB" id="6WGF">
    <property type="method" value="EM"/>
    <property type="resolution" value="7.70 A"/>
    <property type="chains" value="5=1-775"/>
</dbReference>
<dbReference type="PDB" id="6WGG">
    <property type="method" value="EM"/>
    <property type="resolution" value="8.10 A"/>
    <property type="chains" value="5=1-775"/>
</dbReference>
<dbReference type="PDB" id="6WGI">
    <property type="method" value="EM"/>
    <property type="resolution" value="10.00 A"/>
    <property type="chains" value="5=1-775"/>
</dbReference>
<dbReference type="PDB" id="7P30">
    <property type="method" value="EM"/>
    <property type="resolution" value="3.00 A"/>
    <property type="chains" value="5/D=1-775"/>
</dbReference>
<dbReference type="PDB" id="7P5Z">
    <property type="method" value="EM"/>
    <property type="resolution" value="3.30 A"/>
    <property type="chains" value="5/D=1-775"/>
</dbReference>
<dbReference type="PDB" id="7PMK">
    <property type="method" value="EM"/>
    <property type="resolution" value="3.20 A"/>
    <property type="chains" value="5=1-775"/>
</dbReference>
<dbReference type="PDB" id="7PMN">
    <property type="method" value="EM"/>
    <property type="resolution" value="3.20 A"/>
    <property type="chains" value="5=1-775"/>
</dbReference>
<dbReference type="PDB" id="7PT6">
    <property type="method" value="EM"/>
    <property type="resolution" value="3.20 A"/>
    <property type="chains" value="5/E=1-775"/>
</dbReference>
<dbReference type="PDB" id="7PT7">
    <property type="method" value="EM"/>
    <property type="resolution" value="3.80 A"/>
    <property type="chains" value="5/E=1-775"/>
</dbReference>
<dbReference type="PDB" id="7V3U">
    <property type="method" value="EM"/>
    <property type="resolution" value="3.20 A"/>
    <property type="chains" value="5/E=1-775"/>
</dbReference>
<dbReference type="PDB" id="7V3V">
    <property type="method" value="EM"/>
    <property type="resolution" value="2.90 A"/>
    <property type="chains" value="5/E=1-775"/>
</dbReference>
<dbReference type="PDB" id="7W8G">
    <property type="method" value="EM"/>
    <property type="resolution" value="2.52 A"/>
    <property type="chains" value="5/E=1-775"/>
</dbReference>
<dbReference type="PDB" id="8B9A">
    <property type="method" value="EM"/>
    <property type="resolution" value="3.50 A"/>
    <property type="chains" value="5=1-775"/>
</dbReference>
<dbReference type="PDB" id="8B9B">
    <property type="method" value="EM"/>
    <property type="resolution" value="3.50 A"/>
    <property type="chains" value="5=1-775"/>
</dbReference>
<dbReference type="PDB" id="8B9C">
    <property type="method" value="EM"/>
    <property type="resolution" value="4.60 A"/>
    <property type="chains" value="5=1-775"/>
</dbReference>
<dbReference type="PDB" id="8KG6">
    <property type="method" value="EM"/>
    <property type="resolution" value="3.07 A"/>
    <property type="chains" value="5=1-775"/>
</dbReference>
<dbReference type="PDB" id="8KG8">
    <property type="method" value="EM"/>
    <property type="resolution" value="4.23 A"/>
    <property type="chains" value="5=1-775"/>
</dbReference>
<dbReference type="PDB" id="8KG9">
    <property type="method" value="EM"/>
    <property type="resolution" value="4.52 A"/>
    <property type="chains" value="5=1-775"/>
</dbReference>
<dbReference type="PDB" id="8P5E">
    <property type="method" value="EM"/>
    <property type="resolution" value="3.90 A"/>
    <property type="chains" value="5=1-775"/>
</dbReference>
<dbReference type="PDB" id="8P62">
    <property type="method" value="EM"/>
    <property type="resolution" value="3.90 A"/>
    <property type="chains" value="5=1-775"/>
</dbReference>
<dbReference type="PDB" id="8P63">
    <property type="method" value="EM"/>
    <property type="resolution" value="3.70 A"/>
    <property type="chains" value="5=1-775"/>
</dbReference>
<dbReference type="PDB" id="8RIF">
    <property type="method" value="EM"/>
    <property type="resolution" value="2.79 A"/>
    <property type="chains" value="5/D=1-775"/>
</dbReference>
<dbReference type="PDB" id="8RIG">
    <property type="method" value="EM"/>
    <property type="resolution" value="3.41 A"/>
    <property type="chains" value="5=1-775"/>
</dbReference>
<dbReference type="PDB" id="8W7M">
    <property type="method" value="EM"/>
    <property type="resolution" value="4.12 A"/>
    <property type="chains" value="5=1-775"/>
</dbReference>
<dbReference type="PDB" id="8W7S">
    <property type="method" value="EM"/>
    <property type="resolution" value="7.39 A"/>
    <property type="chains" value="5=1-775"/>
</dbReference>
<dbReference type="PDB" id="8XGC">
    <property type="method" value="EM"/>
    <property type="resolution" value="3.70 A"/>
    <property type="chains" value="5=1-775"/>
</dbReference>
<dbReference type="PDB" id="9BCX">
    <property type="method" value="EM"/>
    <property type="resolution" value="6.10 A"/>
    <property type="chains" value="5=1-775"/>
</dbReference>
<dbReference type="PDB" id="9GJP">
    <property type="method" value="EM"/>
    <property type="resolution" value="3.40 A"/>
    <property type="chains" value="5=1-775"/>
</dbReference>
<dbReference type="PDB" id="9GJW">
    <property type="method" value="EM"/>
    <property type="resolution" value="3.30 A"/>
    <property type="chains" value="5=1-775"/>
</dbReference>
<dbReference type="PDB" id="9GM5">
    <property type="method" value="EM"/>
    <property type="resolution" value="3.70 A"/>
    <property type="chains" value="5=1-775"/>
</dbReference>
<dbReference type="PDBsum" id="3JA8"/>
<dbReference type="PDBsum" id="3JC5"/>
<dbReference type="PDBsum" id="3JC6"/>
<dbReference type="PDBsum" id="3JC7"/>
<dbReference type="PDBsum" id="5BK4"/>
<dbReference type="PDBsum" id="5U8S"/>
<dbReference type="PDBsum" id="5U8T"/>
<dbReference type="PDBsum" id="5V8F"/>
<dbReference type="PDBsum" id="5XF8"/>
<dbReference type="PDBsum" id="6EYC"/>
<dbReference type="PDBsum" id="6F0L"/>
<dbReference type="PDBsum" id="6HV9"/>
<dbReference type="PDBsum" id="6PTJ"/>
<dbReference type="PDBsum" id="6PTN"/>
<dbReference type="PDBsum" id="6PTO"/>
<dbReference type="PDBsum" id="6RQC"/>
<dbReference type="PDBsum" id="6SKL"/>
<dbReference type="PDBsum" id="6SKO"/>
<dbReference type="PDBsum" id="6U0M"/>
<dbReference type="PDBsum" id="6WGF"/>
<dbReference type="PDBsum" id="6WGG"/>
<dbReference type="PDBsum" id="6WGI"/>
<dbReference type="PDBsum" id="7P30"/>
<dbReference type="PDBsum" id="7P5Z"/>
<dbReference type="PDBsum" id="7PMK"/>
<dbReference type="PDBsum" id="7PMN"/>
<dbReference type="PDBsum" id="7PT6"/>
<dbReference type="PDBsum" id="7PT7"/>
<dbReference type="PDBsum" id="7V3U"/>
<dbReference type="PDBsum" id="7V3V"/>
<dbReference type="PDBsum" id="7W8G"/>
<dbReference type="PDBsum" id="8B9A"/>
<dbReference type="PDBsum" id="8B9B"/>
<dbReference type="PDBsum" id="8B9C"/>
<dbReference type="PDBsum" id="8KG6"/>
<dbReference type="PDBsum" id="8KG8"/>
<dbReference type="PDBsum" id="8KG9"/>
<dbReference type="PDBsum" id="8P5E"/>
<dbReference type="PDBsum" id="8P62"/>
<dbReference type="PDBsum" id="8P63"/>
<dbReference type="PDBsum" id="8RIF"/>
<dbReference type="PDBsum" id="8RIG"/>
<dbReference type="PDBsum" id="8W7M"/>
<dbReference type="PDBsum" id="8W7S"/>
<dbReference type="PDBsum" id="8XGC"/>
<dbReference type="PDBsum" id="9BCX"/>
<dbReference type="PDBsum" id="9GJP"/>
<dbReference type="PDBsum" id="9GJW"/>
<dbReference type="PDBsum" id="9GM5"/>
<dbReference type="EMDB" id="EMD-10227"/>
<dbReference type="EMDB" id="EMD-10230"/>
<dbReference type="EMDB" id="EMD-13176"/>
<dbReference type="EMDB" id="EMD-13211"/>
<dbReference type="EMDB" id="EMD-13539"/>
<dbReference type="EMDB" id="EMD-13619"/>
<dbReference type="EMDB" id="EMD-13620"/>
<dbReference type="EMDB" id="EMD-13624"/>
<dbReference type="EMDB" id="EMD-13629"/>
<dbReference type="EMDB" id="EMD-13640"/>
<dbReference type="EMDB" id="EMD-13644"/>
<dbReference type="EMDB" id="EMD-13647"/>
<dbReference type="EMDB" id="EMD-13648"/>
<dbReference type="EMDB" id="EMD-13656"/>
<dbReference type="EMDB" id="EMD-15924"/>
<dbReference type="EMDB" id="EMD-17449"/>
<dbReference type="EMDB" id="EMD-17458"/>
<dbReference type="EMDB" id="EMD-17459"/>
<dbReference type="EMDB" id="EMD-19186"/>
<dbReference type="EMDB" id="EMD-19187"/>
<dbReference type="EMDB" id="EMD-20471"/>
<dbReference type="EMDB" id="EMD-20472"/>
<dbReference type="EMDB" id="EMD-20473"/>
<dbReference type="EMDB" id="EMD-20607"/>
<dbReference type="EMDB" id="EMD-21664"/>
<dbReference type="EMDB" id="EMD-21665"/>
<dbReference type="EMDB" id="EMD-21666"/>
<dbReference type="EMDB" id="EMD-31684"/>
<dbReference type="EMDB" id="EMD-31685"/>
<dbReference type="EMDB" id="EMD-32355"/>
<dbReference type="EMDB" id="EMD-37211"/>
<dbReference type="EMDB" id="EMD-37213"/>
<dbReference type="EMDB" id="EMD-37215"/>
<dbReference type="EMDB" id="EMD-37343"/>
<dbReference type="EMDB" id="EMD-37345"/>
<dbReference type="EMDB" id="EMD-38317"/>
<dbReference type="EMDB" id="EMD-4980"/>
<dbReference type="EMDB" id="EMD-51401"/>
<dbReference type="EMDB" id="EMD-51407"/>
<dbReference type="EMDB" id="EMD-51441"/>
<dbReference type="EMDB" id="EMD-6671"/>
<dbReference type="EMDB" id="EMD-8518"/>
<dbReference type="EMDB" id="EMD-8519"/>
<dbReference type="EMDB" id="EMD-8540"/>
<dbReference type="EMDB" id="EMD-9400"/>
<dbReference type="SMR" id="P29496"/>
<dbReference type="BioGRID" id="31542">
    <property type="interactions" value="286"/>
</dbReference>
<dbReference type="ComplexPortal" id="CPX-2944">
    <property type="entry name" value="MCM complex"/>
</dbReference>
<dbReference type="DIP" id="DIP-2406N"/>
<dbReference type="FunCoup" id="P29496">
    <property type="interactions" value="1389"/>
</dbReference>
<dbReference type="IntAct" id="P29496">
    <property type="interactions" value="81"/>
</dbReference>
<dbReference type="MINT" id="P29496"/>
<dbReference type="STRING" id="4932.YLR274W"/>
<dbReference type="iPTMnet" id="P29496"/>
<dbReference type="PaxDb" id="4932-YLR274W"/>
<dbReference type="PeptideAtlas" id="P29496"/>
<dbReference type="EnsemblFungi" id="YLR274W_mRNA">
    <property type="protein sequence ID" value="YLR274W"/>
    <property type="gene ID" value="YLR274W"/>
</dbReference>
<dbReference type="GeneID" id="850980"/>
<dbReference type="KEGG" id="sce:YLR274W"/>
<dbReference type="AGR" id="SGD:S000004264"/>
<dbReference type="SGD" id="S000004264">
    <property type="gene designation" value="MCM5"/>
</dbReference>
<dbReference type="VEuPathDB" id="FungiDB:YLR274W"/>
<dbReference type="eggNOG" id="KOG0481">
    <property type="taxonomic scope" value="Eukaryota"/>
</dbReference>
<dbReference type="GeneTree" id="ENSGT01050000244824"/>
<dbReference type="HOGENOM" id="CLU_000995_7_2_1"/>
<dbReference type="InParanoid" id="P29496"/>
<dbReference type="OMA" id="ITYCKTR"/>
<dbReference type="OrthoDB" id="10036721at2759"/>
<dbReference type="BioCyc" id="YEAST:G3O-32373-MONOMER"/>
<dbReference type="Reactome" id="R-SCE-176187">
    <property type="pathway name" value="Activation of ATR in response to replication stress"/>
</dbReference>
<dbReference type="Reactome" id="R-SCE-68867">
    <property type="pathway name" value="Assembly of the pre-replicative complex"/>
</dbReference>
<dbReference type="Reactome" id="R-SCE-68962">
    <property type="pathway name" value="Activation of the pre-replicative complex"/>
</dbReference>
<dbReference type="Reactome" id="R-SCE-69052">
    <property type="pathway name" value="Switching of origins to a post-replicative state"/>
</dbReference>
<dbReference type="BioGRID-ORCS" id="850980">
    <property type="hits" value="1 hit in 10 CRISPR screens"/>
</dbReference>
<dbReference type="EvolutionaryTrace" id="P29496"/>
<dbReference type="PRO" id="PR:P29496"/>
<dbReference type="Proteomes" id="UP000002311">
    <property type="component" value="Chromosome XII"/>
</dbReference>
<dbReference type="RNAct" id="P29496">
    <property type="molecule type" value="protein"/>
</dbReference>
<dbReference type="GO" id="GO:0000781">
    <property type="term" value="C:chromosome, telomeric region"/>
    <property type="evidence" value="ECO:0000314"/>
    <property type="project" value="SGD"/>
</dbReference>
<dbReference type="GO" id="GO:0071162">
    <property type="term" value="C:CMG complex"/>
    <property type="evidence" value="ECO:0000314"/>
    <property type="project" value="SGD"/>
</dbReference>
<dbReference type="GO" id="GO:0005737">
    <property type="term" value="C:cytoplasm"/>
    <property type="evidence" value="ECO:0000314"/>
    <property type="project" value="SGD"/>
</dbReference>
<dbReference type="GO" id="GO:0031261">
    <property type="term" value="C:DNA replication preinitiation complex"/>
    <property type="evidence" value="ECO:0000353"/>
    <property type="project" value="SGD"/>
</dbReference>
<dbReference type="GO" id="GO:0042555">
    <property type="term" value="C:MCM complex"/>
    <property type="evidence" value="ECO:0000314"/>
    <property type="project" value="SGD"/>
</dbReference>
<dbReference type="GO" id="GO:0005656">
    <property type="term" value="C:nuclear pre-replicative complex"/>
    <property type="evidence" value="ECO:0000314"/>
    <property type="project" value="SGD"/>
</dbReference>
<dbReference type="GO" id="GO:0043596">
    <property type="term" value="C:nuclear replication fork"/>
    <property type="evidence" value="ECO:0000314"/>
    <property type="project" value="ComplexPortal"/>
</dbReference>
<dbReference type="GO" id="GO:0005654">
    <property type="term" value="C:nucleoplasm"/>
    <property type="evidence" value="ECO:0000304"/>
    <property type="project" value="Reactome"/>
</dbReference>
<dbReference type="GO" id="GO:0005634">
    <property type="term" value="C:nucleus"/>
    <property type="evidence" value="ECO:0000314"/>
    <property type="project" value="SGD"/>
</dbReference>
<dbReference type="GO" id="GO:0031298">
    <property type="term" value="C:replication fork protection complex"/>
    <property type="evidence" value="ECO:0007669"/>
    <property type="project" value="UniProtKB-ARBA"/>
</dbReference>
<dbReference type="GO" id="GO:0005524">
    <property type="term" value="F:ATP binding"/>
    <property type="evidence" value="ECO:0007669"/>
    <property type="project" value="UniProtKB-KW"/>
</dbReference>
<dbReference type="GO" id="GO:0016887">
    <property type="term" value="F:ATP hydrolysis activity"/>
    <property type="evidence" value="ECO:0007669"/>
    <property type="project" value="RHEA"/>
</dbReference>
<dbReference type="GO" id="GO:0003682">
    <property type="term" value="F:chromatin binding"/>
    <property type="evidence" value="ECO:0000314"/>
    <property type="project" value="SGD"/>
</dbReference>
<dbReference type="GO" id="GO:0003688">
    <property type="term" value="F:DNA replication origin binding"/>
    <property type="evidence" value="ECO:0000314"/>
    <property type="project" value="SGD"/>
</dbReference>
<dbReference type="GO" id="GO:0004386">
    <property type="term" value="F:helicase activity"/>
    <property type="evidence" value="ECO:0007669"/>
    <property type="project" value="UniProtKB-KW"/>
</dbReference>
<dbReference type="GO" id="GO:0006270">
    <property type="term" value="P:DNA replication initiation"/>
    <property type="evidence" value="ECO:0000315"/>
    <property type="project" value="SGD"/>
</dbReference>
<dbReference type="GO" id="GO:0000727">
    <property type="term" value="P:double-strand break repair via break-induced replication"/>
    <property type="evidence" value="ECO:0000315"/>
    <property type="project" value="SGD"/>
</dbReference>
<dbReference type="GO" id="GO:0031507">
    <property type="term" value="P:heterochromatin formation"/>
    <property type="evidence" value="ECO:0000315"/>
    <property type="project" value="SGD"/>
</dbReference>
<dbReference type="GO" id="GO:0033260">
    <property type="term" value="P:nuclear DNA replication"/>
    <property type="evidence" value="ECO:0000315"/>
    <property type="project" value="SGD"/>
</dbReference>
<dbReference type="GO" id="GO:0006267">
    <property type="term" value="P:pre-replicative complex assembly involved in nuclear cell cycle DNA replication"/>
    <property type="evidence" value="ECO:0000314"/>
    <property type="project" value="SGD"/>
</dbReference>
<dbReference type="GO" id="GO:0006279">
    <property type="term" value="P:premeiotic DNA replication"/>
    <property type="evidence" value="ECO:0000314"/>
    <property type="project" value="ComplexPortal"/>
</dbReference>
<dbReference type="GO" id="GO:0030174">
    <property type="term" value="P:regulation of DNA-templated DNA replication initiation"/>
    <property type="evidence" value="ECO:0000315"/>
    <property type="project" value="SGD"/>
</dbReference>
<dbReference type="GO" id="GO:0031509">
    <property type="term" value="P:subtelomeric heterochromatin formation"/>
    <property type="evidence" value="ECO:0000315"/>
    <property type="project" value="SGD"/>
</dbReference>
<dbReference type="GO" id="GO:0006368">
    <property type="term" value="P:transcription elongation by RNA polymerase II"/>
    <property type="evidence" value="ECO:0000314"/>
    <property type="project" value="SGD"/>
</dbReference>
<dbReference type="CDD" id="cd17756">
    <property type="entry name" value="MCM5"/>
    <property type="match status" value="1"/>
</dbReference>
<dbReference type="FunFam" id="2.20.28.10:FF:000014">
    <property type="entry name" value="DNA helicase"/>
    <property type="match status" value="1"/>
</dbReference>
<dbReference type="FunFam" id="3.30.1640.10:FF:000015">
    <property type="entry name" value="DNA helicase"/>
    <property type="match status" value="1"/>
</dbReference>
<dbReference type="FunFam" id="3.40.50.300:FF:000241">
    <property type="entry name" value="DNA helicase"/>
    <property type="match status" value="1"/>
</dbReference>
<dbReference type="Gene3D" id="2.20.28.10">
    <property type="match status" value="1"/>
</dbReference>
<dbReference type="Gene3D" id="3.30.1640.10">
    <property type="entry name" value="mini-chromosome maintenance (MCM) complex, chain A, domain 1"/>
    <property type="match status" value="1"/>
</dbReference>
<dbReference type="Gene3D" id="2.40.50.140">
    <property type="entry name" value="Nucleic acid-binding proteins"/>
    <property type="match status" value="1"/>
</dbReference>
<dbReference type="Gene3D" id="3.40.50.300">
    <property type="entry name" value="P-loop containing nucleotide triphosphate hydrolases"/>
    <property type="match status" value="1"/>
</dbReference>
<dbReference type="InterPro" id="IPR031327">
    <property type="entry name" value="MCM"/>
</dbReference>
<dbReference type="InterPro" id="IPR008048">
    <property type="entry name" value="MCM5"/>
</dbReference>
<dbReference type="InterPro" id="IPR054125">
    <property type="entry name" value="MCM5_C"/>
</dbReference>
<dbReference type="InterPro" id="IPR018525">
    <property type="entry name" value="MCM_CS"/>
</dbReference>
<dbReference type="InterPro" id="IPR001208">
    <property type="entry name" value="MCM_dom"/>
</dbReference>
<dbReference type="InterPro" id="IPR041562">
    <property type="entry name" value="MCM_lid"/>
</dbReference>
<dbReference type="InterPro" id="IPR027925">
    <property type="entry name" value="MCM_N"/>
</dbReference>
<dbReference type="InterPro" id="IPR033762">
    <property type="entry name" value="MCM_OB"/>
</dbReference>
<dbReference type="InterPro" id="IPR012340">
    <property type="entry name" value="NA-bd_OB-fold"/>
</dbReference>
<dbReference type="InterPro" id="IPR027417">
    <property type="entry name" value="P-loop_NTPase"/>
</dbReference>
<dbReference type="PANTHER" id="PTHR11630">
    <property type="entry name" value="DNA REPLICATION LICENSING FACTOR MCM FAMILY MEMBER"/>
    <property type="match status" value="1"/>
</dbReference>
<dbReference type="PANTHER" id="PTHR11630:SF42">
    <property type="entry name" value="DNA REPLICATION LICENSING FACTOR MCM5"/>
    <property type="match status" value="1"/>
</dbReference>
<dbReference type="Pfam" id="PF00493">
    <property type="entry name" value="MCM"/>
    <property type="match status" value="1"/>
</dbReference>
<dbReference type="Pfam" id="PF21933">
    <property type="entry name" value="MCM5_C"/>
    <property type="match status" value="1"/>
</dbReference>
<dbReference type="Pfam" id="PF17855">
    <property type="entry name" value="MCM_lid"/>
    <property type="match status" value="1"/>
</dbReference>
<dbReference type="Pfam" id="PF14551">
    <property type="entry name" value="MCM_N"/>
    <property type="match status" value="1"/>
</dbReference>
<dbReference type="Pfam" id="PF17207">
    <property type="entry name" value="MCM_OB"/>
    <property type="match status" value="1"/>
</dbReference>
<dbReference type="PRINTS" id="PR01657">
    <property type="entry name" value="MCMFAMILY"/>
</dbReference>
<dbReference type="PRINTS" id="PR01661">
    <property type="entry name" value="MCMPROTEIN5"/>
</dbReference>
<dbReference type="SMART" id="SM00350">
    <property type="entry name" value="MCM"/>
    <property type="match status" value="1"/>
</dbReference>
<dbReference type="SUPFAM" id="SSF50249">
    <property type="entry name" value="Nucleic acid-binding proteins"/>
    <property type="match status" value="1"/>
</dbReference>
<dbReference type="SUPFAM" id="SSF52540">
    <property type="entry name" value="P-loop containing nucleoside triphosphate hydrolases"/>
    <property type="match status" value="1"/>
</dbReference>
<dbReference type="PROSITE" id="PS00847">
    <property type="entry name" value="MCM_1"/>
    <property type="match status" value="1"/>
</dbReference>
<dbReference type="PROSITE" id="PS50051">
    <property type="entry name" value="MCM_2"/>
    <property type="match status" value="1"/>
</dbReference>
<gene>
    <name type="primary">MCM5</name>
    <name type="synonym">CDC46</name>
    <name type="ordered locus">YLR274W</name>
    <name type="ORF">L9328.1</name>
</gene>
<name>MCM5_YEAST</name>
<proteinExistence type="evidence at protein level"/>
<accession>P29496</accession>
<accession>D6VYS1</accession>